<reference key="1">
    <citation type="journal article" date="1987" name="Biochemistry">
        <title>Ovomucoid third domains from 100 avian species: isolation, sequences, and hypervariability of enzyme-inhibitor contact residues.</title>
        <authorList>
            <person name="Laskowski M. Jr."/>
            <person name="Kato I."/>
            <person name="Ardelt W."/>
            <person name="Cook J."/>
            <person name="Denton A."/>
            <person name="Empie M.W."/>
            <person name="Kohr W.J."/>
            <person name="Park S.J."/>
            <person name="Parks K."/>
            <person name="Schatzley B.L."/>
            <person name="Schoenberger O.L."/>
            <person name="Tashiro M."/>
            <person name="Vichot G."/>
            <person name="Whatley H.E."/>
            <person name="Wieczorek A."/>
            <person name="Wieczorek M."/>
        </authorList>
    </citation>
    <scope>PROTEIN SEQUENCE</scope>
</reference>
<feature type="chain" id="PRO_0000073189" description="Ovomucoid">
    <location>
        <begin position="1" status="less than"/>
        <end position="56" status="greater than"/>
    </location>
</feature>
<feature type="domain" description="Kazal-like" evidence="1">
    <location>
        <begin position="6"/>
        <end position="56"/>
    </location>
</feature>
<feature type="site" description="Reactive bond 3">
    <location>
        <begin position="18"/>
        <end position="19"/>
    </location>
</feature>
<feature type="glycosylation site" description="N-linked (GlcNAc...) asparagine">
    <location>
        <position position="45"/>
    </location>
</feature>
<feature type="disulfide bond">
    <location>
        <begin position="8"/>
        <end position="38"/>
    </location>
</feature>
<feature type="disulfide bond">
    <location>
        <begin position="16"/>
        <end position="35"/>
    </location>
</feature>
<feature type="disulfide bond">
    <location>
        <begin position="24"/>
        <end position="56"/>
    </location>
</feature>
<feature type="non-terminal residue">
    <location>
        <position position="1"/>
    </location>
</feature>
<feature type="non-terminal residue">
    <location>
        <position position="56"/>
    </location>
</feature>
<organism>
    <name type="scientific">Tragopan satyra</name>
    <name type="common">Satyr tragopan</name>
    <name type="synonym">Meleagris satyra</name>
    <dbReference type="NCBI Taxonomy" id="9070"/>
    <lineage>
        <taxon>Eukaryota</taxon>
        <taxon>Metazoa</taxon>
        <taxon>Chordata</taxon>
        <taxon>Craniata</taxon>
        <taxon>Vertebrata</taxon>
        <taxon>Euteleostomi</taxon>
        <taxon>Archelosauria</taxon>
        <taxon>Archosauria</taxon>
        <taxon>Dinosauria</taxon>
        <taxon>Saurischia</taxon>
        <taxon>Theropoda</taxon>
        <taxon>Coelurosauria</taxon>
        <taxon>Aves</taxon>
        <taxon>Neognathae</taxon>
        <taxon>Galloanserae</taxon>
        <taxon>Galliformes</taxon>
        <taxon>Phasianidae</taxon>
        <taxon>Phasianinae</taxon>
        <taxon>Tragopan</taxon>
    </lineage>
</organism>
<dbReference type="PIR" id="I31445">
    <property type="entry name" value="I31445"/>
</dbReference>
<dbReference type="SMR" id="P67948"/>
<dbReference type="GO" id="GO:0005615">
    <property type="term" value="C:extracellular space"/>
    <property type="evidence" value="ECO:0007669"/>
    <property type="project" value="UniProtKB-ARBA"/>
</dbReference>
<dbReference type="GO" id="GO:0004867">
    <property type="term" value="F:serine-type endopeptidase inhibitor activity"/>
    <property type="evidence" value="ECO:0007669"/>
    <property type="project" value="UniProtKB-KW"/>
</dbReference>
<dbReference type="CDD" id="cd00104">
    <property type="entry name" value="KAZAL_FS"/>
    <property type="match status" value="1"/>
</dbReference>
<dbReference type="FunFam" id="3.30.60.30:FF:000037">
    <property type="entry name" value="Ovomucoid"/>
    <property type="match status" value="1"/>
</dbReference>
<dbReference type="Gene3D" id="3.30.60.30">
    <property type="match status" value="1"/>
</dbReference>
<dbReference type="InterPro" id="IPR051597">
    <property type="entry name" value="Bifunctional_prot_inhibitor"/>
</dbReference>
<dbReference type="InterPro" id="IPR002350">
    <property type="entry name" value="Kazal_dom"/>
</dbReference>
<dbReference type="InterPro" id="IPR036058">
    <property type="entry name" value="Kazal_dom_sf"/>
</dbReference>
<dbReference type="InterPro" id="IPR001239">
    <property type="entry name" value="Prot_inh_Kazal-m"/>
</dbReference>
<dbReference type="PANTHER" id="PTHR47729:SF1">
    <property type="entry name" value="OVOMUCOID-LIKE-RELATED"/>
    <property type="match status" value="1"/>
</dbReference>
<dbReference type="PANTHER" id="PTHR47729">
    <property type="entry name" value="SERINE PEPTIDASE INHIBITOR, KAZAL TYPE 2, TANDEM DUPLICATE 1-RELATED"/>
    <property type="match status" value="1"/>
</dbReference>
<dbReference type="Pfam" id="PF00050">
    <property type="entry name" value="Kazal_1"/>
    <property type="match status" value="1"/>
</dbReference>
<dbReference type="PRINTS" id="PR00290">
    <property type="entry name" value="KAZALINHBTR"/>
</dbReference>
<dbReference type="SMART" id="SM00280">
    <property type="entry name" value="KAZAL"/>
    <property type="match status" value="1"/>
</dbReference>
<dbReference type="SUPFAM" id="SSF100895">
    <property type="entry name" value="Kazal-type serine protease inhibitors"/>
    <property type="match status" value="1"/>
</dbReference>
<dbReference type="PROSITE" id="PS00282">
    <property type="entry name" value="KAZAL_1"/>
    <property type="match status" value="1"/>
</dbReference>
<dbReference type="PROSITE" id="PS51465">
    <property type="entry name" value="KAZAL_2"/>
    <property type="match status" value="1"/>
</dbReference>
<evidence type="ECO:0000255" key="1">
    <source>
        <dbReference type="PROSITE-ProRule" id="PRU00798"/>
    </source>
</evidence>
<proteinExistence type="evidence at protein level"/>
<name>IOVO_TRASA</name>
<accession>P67948</accession>
<accession>P05586</accession>
<sequence>LAAVSVDCSEYPKPACTMEYRPLCGSDNKTYGNKCNFCNAVVESNGTLTLSHFGKC</sequence>
<comment type="subcellular location">
    <subcellularLocation>
        <location>Secreted</location>
    </subcellularLocation>
</comment>
<comment type="domain">
    <text>Avian ovomucoid consists of three homologous, tandem Kazal family inhibitory domains.</text>
</comment>
<keyword id="KW-0903">Direct protein sequencing</keyword>
<keyword id="KW-1015">Disulfide bond</keyword>
<keyword id="KW-0325">Glycoprotein</keyword>
<keyword id="KW-0646">Protease inhibitor</keyword>
<keyword id="KW-0677">Repeat</keyword>
<keyword id="KW-0964">Secreted</keyword>
<keyword id="KW-0722">Serine protease inhibitor</keyword>
<protein>
    <recommendedName>
        <fullName>Ovomucoid</fullName>
    </recommendedName>
</protein>